<gene>
    <name type="primary">VMA4</name>
    <name type="ORF">Ca49C4.18</name>
</gene>
<proteinExistence type="inferred from homology"/>
<dbReference type="EMBL" id="AL033503">
    <property type="protein sequence ID" value="CAA22028.1"/>
    <property type="molecule type" value="Genomic_DNA"/>
</dbReference>
<dbReference type="PIR" id="T18254">
    <property type="entry name" value="T18254"/>
</dbReference>
<dbReference type="SMR" id="O94072"/>
<dbReference type="EnsemblFungi" id="CR_01970C_A-T">
    <property type="protein sequence ID" value="CR_01970C_A-T-p1"/>
    <property type="gene ID" value="CR_01970C_A"/>
</dbReference>
<dbReference type="CGD" id="CAL0000187034">
    <property type="gene designation" value="VMA4"/>
</dbReference>
<dbReference type="VEuPathDB" id="FungiDB:CAWG_01541"/>
<dbReference type="VEuPathDB" id="FungiDB:CR_01970C_A"/>
<dbReference type="OMA" id="QHMMAFI"/>
<dbReference type="PhylomeDB" id="O94072"/>
<dbReference type="PHI-base" id="PHI:9703"/>
<dbReference type="GO" id="GO:0000329">
    <property type="term" value="C:fungal-type vacuole membrane"/>
    <property type="evidence" value="ECO:0007669"/>
    <property type="project" value="EnsemblFungi"/>
</dbReference>
<dbReference type="GO" id="GO:0045121">
    <property type="term" value="C:membrane raft"/>
    <property type="evidence" value="ECO:0007669"/>
    <property type="project" value="EnsemblFungi"/>
</dbReference>
<dbReference type="GO" id="GO:0000221">
    <property type="term" value="C:vacuolar proton-transporting V-type ATPase, V1 domain"/>
    <property type="evidence" value="ECO:0000250"/>
    <property type="project" value="UniProtKB"/>
</dbReference>
<dbReference type="GO" id="GO:0046961">
    <property type="term" value="F:proton-transporting ATPase activity, rotational mechanism"/>
    <property type="evidence" value="ECO:0007669"/>
    <property type="project" value="InterPro"/>
</dbReference>
<dbReference type="Gene3D" id="6.10.250.1620">
    <property type="match status" value="1"/>
</dbReference>
<dbReference type="Gene3D" id="3.30.2320.30">
    <property type="entry name" value="ATP synthase, E subunit, C-terminal"/>
    <property type="match status" value="1"/>
</dbReference>
<dbReference type="HAMAP" id="MF_00311">
    <property type="entry name" value="ATP_synth_E_arch"/>
    <property type="match status" value="1"/>
</dbReference>
<dbReference type="InterPro" id="IPR038495">
    <property type="entry name" value="ATPase_E_C"/>
</dbReference>
<dbReference type="InterPro" id="IPR002842">
    <property type="entry name" value="ATPase_V1_Esu"/>
</dbReference>
<dbReference type="PANTHER" id="PTHR45715">
    <property type="entry name" value="ATPASE H+-TRANSPORTING V1 SUBUNIT E1A-RELATED"/>
    <property type="match status" value="1"/>
</dbReference>
<dbReference type="Pfam" id="PF01991">
    <property type="entry name" value="vATP-synt_E"/>
    <property type="match status" value="1"/>
</dbReference>
<dbReference type="SUPFAM" id="SSF160527">
    <property type="entry name" value="V-type ATPase subunit E-like"/>
    <property type="match status" value="1"/>
</dbReference>
<comment type="function">
    <text evidence="1">Subunit of the V1 complex of vacuolar(H+)-ATPase (V-ATPase), a multisubunit enzyme composed of a peripheral complex (V1) that hydrolyzes ATP and a membrane integral complex (V0) that translocates protons (By similarity). V-ATPase is responsible for acidifying and maintaining the pH of intracellular compartments (By similarity).</text>
</comment>
<comment type="subunit">
    <text evidence="1">V-ATPase is a heteromultimeric enzyme composed of a peripheral catalytic V1 complex (components A to H) attached to an integral membrane V0 proton pore complex (components: a, c, c', c'', d, e, f and VOA1).</text>
</comment>
<comment type="subcellular location">
    <subcellularLocation>
        <location evidence="1">Vacuole membrane</location>
        <topology evidence="1">Peripheral membrane protein</topology>
        <orientation evidence="2">Cytoplasmic side</orientation>
    </subcellularLocation>
</comment>
<comment type="similarity">
    <text evidence="2">Belongs to the V-ATPase E subunit family.</text>
</comment>
<organism>
    <name type="scientific">Candida albicans</name>
    <name type="common">Yeast</name>
    <dbReference type="NCBI Taxonomy" id="5476"/>
    <lineage>
        <taxon>Eukaryota</taxon>
        <taxon>Fungi</taxon>
        <taxon>Dikarya</taxon>
        <taxon>Ascomycota</taxon>
        <taxon>Saccharomycotina</taxon>
        <taxon>Pichiomycetes</taxon>
        <taxon>Debaryomycetaceae</taxon>
        <taxon>Candida/Lodderomyces clade</taxon>
        <taxon>Candida</taxon>
    </lineage>
</organism>
<reference key="1">
    <citation type="submission" date="1998-11" db="EMBL/GenBank/DDBJ databases">
        <title>Candida albicans strain 1161 genome pilot sequencing project.</title>
        <authorList>
            <person name="Murphy L."/>
            <person name="Harris D."/>
            <person name="Barrell B.G."/>
            <person name="Rajandream M.A."/>
        </authorList>
    </citation>
    <scope>NUCLEOTIDE SEQUENCE [LARGE SCALE GENOMIC DNA]</scope>
    <source>
        <strain>1161</strain>
    </source>
</reference>
<keyword id="KW-0375">Hydrogen ion transport</keyword>
<keyword id="KW-0406">Ion transport</keyword>
<keyword id="KW-0472">Membrane</keyword>
<keyword id="KW-0813">Transport</keyword>
<keyword id="KW-0926">Vacuole</keyword>
<accession>O94072</accession>
<evidence type="ECO:0000250" key="1">
    <source>
        <dbReference type="UniProtKB" id="P22203"/>
    </source>
</evidence>
<evidence type="ECO:0000305" key="2"/>
<feature type="chain" id="PRO_0000117307" description="V-type proton ATPase subunit E">
    <location>
        <begin position="1"/>
        <end position="226"/>
    </location>
</feature>
<name>VATE_CANAX</name>
<sequence>MALSDEQVKSELSKMQAFIEKEAKEKAKEIKLKADEEYEIEKASIVRSETAAIDSTYEQKLKKASLAQQITKSTIGNKTRLRILSTKDEVLHEIFDEAEAELKKITKDKKQYKPVLVGLIEEGVLALMEPKVSIKVREQDVDVAKEAITEAAKNFEEKAKFKVEISIDDKNFLAKDIAGGIVVVNGSGKIEVDNTLEERLKILSEEALPAIRLELFGPSTTRKFFD</sequence>
<protein>
    <recommendedName>
        <fullName>V-type proton ATPase subunit E</fullName>
        <shortName>V-ATPase subunit E</shortName>
    </recommendedName>
    <alternativeName>
        <fullName>Vacuolar proton pump subunit E</fullName>
    </alternativeName>
</protein>